<keyword id="KW-0328">Glycosyltransferase</keyword>
<keyword id="KW-0479">Metal-binding</keyword>
<keyword id="KW-0671">Queuosine biosynthesis</keyword>
<keyword id="KW-1185">Reference proteome</keyword>
<keyword id="KW-0808">Transferase</keyword>
<keyword id="KW-0819">tRNA processing</keyword>
<keyword id="KW-0862">Zinc</keyword>
<evidence type="ECO:0000255" key="1">
    <source>
        <dbReference type="HAMAP-Rule" id="MF_00168"/>
    </source>
</evidence>
<proteinExistence type="inferred from homology"/>
<accession>Q3SH61</accession>
<dbReference type="EC" id="2.4.2.29" evidence="1"/>
<dbReference type="EMBL" id="CP000116">
    <property type="protein sequence ID" value="AAZ98028.1"/>
    <property type="molecule type" value="Genomic_DNA"/>
</dbReference>
<dbReference type="RefSeq" id="WP_011312587.1">
    <property type="nucleotide sequence ID" value="NC_007404.1"/>
</dbReference>
<dbReference type="SMR" id="Q3SH61"/>
<dbReference type="STRING" id="292415.Tbd_2075"/>
<dbReference type="KEGG" id="tbd:Tbd_2075"/>
<dbReference type="eggNOG" id="COG0343">
    <property type="taxonomic scope" value="Bacteria"/>
</dbReference>
<dbReference type="HOGENOM" id="CLU_022060_0_1_4"/>
<dbReference type="OrthoDB" id="9805417at2"/>
<dbReference type="UniPathway" id="UPA00392"/>
<dbReference type="Proteomes" id="UP000008291">
    <property type="component" value="Chromosome"/>
</dbReference>
<dbReference type="GO" id="GO:0005829">
    <property type="term" value="C:cytosol"/>
    <property type="evidence" value="ECO:0007669"/>
    <property type="project" value="TreeGrafter"/>
</dbReference>
<dbReference type="GO" id="GO:0046872">
    <property type="term" value="F:metal ion binding"/>
    <property type="evidence" value="ECO:0007669"/>
    <property type="project" value="UniProtKB-KW"/>
</dbReference>
<dbReference type="GO" id="GO:0008479">
    <property type="term" value="F:tRNA-guanosine(34) queuine transglycosylase activity"/>
    <property type="evidence" value="ECO:0007669"/>
    <property type="project" value="UniProtKB-UniRule"/>
</dbReference>
<dbReference type="GO" id="GO:0008616">
    <property type="term" value="P:queuosine biosynthetic process"/>
    <property type="evidence" value="ECO:0007669"/>
    <property type="project" value="UniProtKB-UniRule"/>
</dbReference>
<dbReference type="GO" id="GO:0002099">
    <property type="term" value="P:tRNA wobble guanine modification"/>
    <property type="evidence" value="ECO:0007669"/>
    <property type="project" value="TreeGrafter"/>
</dbReference>
<dbReference type="GO" id="GO:0101030">
    <property type="term" value="P:tRNA-guanine transglycosylation"/>
    <property type="evidence" value="ECO:0007669"/>
    <property type="project" value="InterPro"/>
</dbReference>
<dbReference type="FunFam" id="3.20.20.105:FF:000001">
    <property type="entry name" value="Queuine tRNA-ribosyltransferase"/>
    <property type="match status" value="1"/>
</dbReference>
<dbReference type="Gene3D" id="3.20.20.105">
    <property type="entry name" value="Queuine tRNA-ribosyltransferase-like"/>
    <property type="match status" value="1"/>
</dbReference>
<dbReference type="HAMAP" id="MF_00168">
    <property type="entry name" value="Q_tRNA_Tgt"/>
    <property type="match status" value="1"/>
</dbReference>
<dbReference type="InterPro" id="IPR050076">
    <property type="entry name" value="ArchSynthase1/Queuine_TRR"/>
</dbReference>
<dbReference type="InterPro" id="IPR004803">
    <property type="entry name" value="TGT"/>
</dbReference>
<dbReference type="InterPro" id="IPR036511">
    <property type="entry name" value="TGT-like_sf"/>
</dbReference>
<dbReference type="InterPro" id="IPR002616">
    <property type="entry name" value="tRNA_ribo_trans-like"/>
</dbReference>
<dbReference type="NCBIfam" id="TIGR00430">
    <property type="entry name" value="Q_tRNA_tgt"/>
    <property type="match status" value="1"/>
</dbReference>
<dbReference type="NCBIfam" id="TIGR00449">
    <property type="entry name" value="tgt_general"/>
    <property type="match status" value="1"/>
</dbReference>
<dbReference type="PANTHER" id="PTHR46499">
    <property type="entry name" value="QUEUINE TRNA-RIBOSYLTRANSFERASE"/>
    <property type="match status" value="1"/>
</dbReference>
<dbReference type="PANTHER" id="PTHR46499:SF1">
    <property type="entry name" value="QUEUINE TRNA-RIBOSYLTRANSFERASE"/>
    <property type="match status" value="1"/>
</dbReference>
<dbReference type="Pfam" id="PF01702">
    <property type="entry name" value="TGT"/>
    <property type="match status" value="1"/>
</dbReference>
<dbReference type="SUPFAM" id="SSF51713">
    <property type="entry name" value="tRNA-guanine transglycosylase"/>
    <property type="match status" value="1"/>
</dbReference>
<organism>
    <name type="scientific">Thiobacillus denitrificans (strain ATCC 25259 / T1)</name>
    <dbReference type="NCBI Taxonomy" id="292415"/>
    <lineage>
        <taxon>Bacteria</taxon>
        <taxon>Pseudomonadati</taxon>
        <taxon>Pseudomonadota</taxon>
        <taxon>Betaproteobacteria</taxon>
        <taxon>Nitrosomonadales</taxon>
        <taxon>Thiobacillaceae</taxon>
        <taxon>Thiobacillus</taxon>
    </lineage>
</organism>
<gene>
    <name evidence="1" type="primary">tgt</name>
    <name type="ordered locus">Tbd_2075</name>
</gene>
<sequence>MKFDLLRTDGGARRGQLHLAHGVVQTPVFMPVGTYGTVKAMSPTEIADIGFEMLLSNTFHLWLRPGLEVIEAHGGLHRFMGWDKPILTDSGGFQVFSLGKLRKITEEGVKFASPTNGDKLFLTPETSMQIQRTLNSDIVMIFDECTPYPATERQAADSMRMSLRWAARSKAAHAGNPNALYGIVQGGMYEALRDESARELIGMDFDGYAIGGLSVGEPKDDMTRILAHTAPQLPADKPRYLMGVGTPSDLVAAVAAGIDQFDCVLPTRNARHGILFTRRGEIRIRNARWKLDTAPIDEECDCYACRHFTRAYVHHLIRAGEILGARLTTLHNLHYYHRLMAEVRAAIDAQRFSEFVARFHATQALGW</sequence>
<reference key="1">
    <citation type="journal article" date="2006" name="J. Bacteriol.">
        <title>The genome sequence of the obligately chemolithoautotrophic, facultatively anaerobic bacterium Thiobacillus denitrificans.</title>
        <authorList>
            <person name="Beller H.R."/>
            <person name="Chain P.S."/>
            <person name="Letain T.E."/>
            <person name="Chakicherla A."/>
            <person name="Larimer F.W."/>
            <person name="Richardson P.M."/>
            <person name="Coleman M.A."/>
            <person name="Wood A.P."/>
            <person name="Kelly D.P."/>
        </authorList>
    </citation>
    <scope>NUCLEOTIDE SEQUENCE [LARGE SCALE GENOMIC DNA]</scope>
    <source>
        <strain>ATCC 25259 / T1</strain>
    </source>
</reference>
<comment type="function">
    <text evidence="1">Catalyzes the base-exchange of a guanine (G) residue with the queuine precursor 7-aminomethyl-7-deazaguanine (PreQ1) at position 34 (anticodon wobble position) in tRNAs with GU(N) anticodons (tRNA-Asp, -Asn, -His and -Tyr). Catalysis occurs through a double-displacement mechanism. The nucleophile active site attacks the C1' of nucleotide 34 to detach the guanine base from the RNA, forming a covalent enzyme-RNA intermediate. The proton acceptor active site deprotonates the incoming PreQ1, allowing a nucleophilic attack on the C1' of the ribose to form the product. After dissociation, two additional enzymatic reactions on the tRNA convert PreQ1 to queuine (Q), resulting in the hypermodified nucleoside queuosine (7-(((4,5-cis-dihydroxy-2-cyclopenten-1-yl)amino)methyl)-7-deazaguanosine).</text>
</comment>
<comment type="catalytic activity">
    <reaction evidence="1">
        <text>7-aminomethyl-7-carbaguanine + guanosine(34) in tRNA = 7-aminomethyl-7-carbaguanosine(34) in tRNA + guanine</text>
        <dbReference type="Rhea" id="RHEA:24104"/>
        <dbReference type="Rhea" id="RHEA-COMP:10341"/>
        <dbReference type="Rhea" id="RHEA-COMP:10342"/>
        <dbReference type="ChEBI" id="CHEBI:16235"/>
        <dbReference type="ChEBI" id="CHEBI:58703"/>
        <dbReference type="ChEBI" id="CHEBI:74269"/>
        <dbReference type="ChEBI" id="CHEBI:82833"/>
        <dbReference type="EC" id="2.4.2.29"/>
    </reaction>
</comment>
<comment type="cofactor">
    <cofactor evidence="1">
        <name>Zn(2+)</name>
        <dbReference type="ChEBI" id="CHEBI:29105"/>
    </cofactor>
    <text evidence="1">Binds 1 zinc ion per subunit.</text>
</comment>
<comment type="pathway">
    <text evidence="1">tRNA modification; tRNA-queuosine biosynthesis.</text>
</comment>
<comment type="subunit">
    <text evidence="1">Homodimer. Within each dimer, one monomer is responsible for RNA recognition and catalysis, while the other monomer binds to the replacement base PreQ1.</text>
</comment>
<comment type="similarity">
    <text evidence="1">Belongs to the queuine tRNA-ribosyltransferase family.</text>
</comment>
<feature type="chain" id="PRO_1000016885" description="Queuine tRNA-ribosyltransferase">
    <location>
        <begin position="1"/>
        <end position="367"/>
    </location>
</feature>
<feature type="region of interest" description="RNA binding" evidence="1">
    <location>
        <begin position="243"/>
        <end position="249"/>
    </location>
</feature>
<feature type="region of interest" description="RNA binding; important for wobble base 34 recognition" evidence="1">
    <location>
        <begin position="267"/>
        <end position="271"/>
    </location>
</feature>
<feature type="active site" description="Proton acceptor" evidence="1">
    <location>
        <position position="89"/>
    </location>
</feature>
<feature type="active site" description="Nucleophile" evidence="1">
    <location>
        <position position="262"/>
    </location>
</feature>
<feature type="binding site" evidence="1">
    <location>
        <begin position="89"/>
        <end position="93"/>
    </location>
    <ligand>
        <name>substrate</name>
    </ligand>
</feature>
<feature type="binding site" evidence="1">
    <location>
        <position position="143"/>
    </location>
    <ligand>
        <name>substrate</name>
    </ligand>
</feature>
<feature type="binding site" evidence="1">
    <location>
        <position position="185"/>
    </location>
    <ligand>
        <name>substrate</name>
    </ligand>
</feature>
<feature type="binding site" evidence="1">
    <location>
        <position position="212"/>
    </location>
    <ligand>
        <name>substrate</name>
    </ligand>
</feature>
<feature type="binding site" evidence="1">
    <location>
        <position position="300"/>
    </location>
    <ligand>
        <name>Zn(2+)</name>
        <dbReference type="ChEBI" id="CHEBI:29105"/>
    </ligand>
</feature>
<feature type="binding site" evidence="1">
    <location>
        <position position="302"/>
    </location>
    <ligand>
        <name>Zn(2+)</name>
        <dbReference type="ChEBI" id="CHEBI:29105"/>
    </ligand>
</feature>
<feature type="binding site" evidence="1">
    <location>
        <position position="305"/>
    </location>
    <ligand>
        <name>Zn(2+)</name>
        <dbReference type="ChEBI" id="CHEBI:29105"/>
    </ligand>
</feature>
<feature type="binding site" evidence="1">
    <location>
        <position position="331"/>
    </location>
    <ligand>
        <name>Zn(2+)</name>
        <dbReference type="ChEBI" id="CHEBI:29105"/>
    </ligand>
</feature>
<protein>
    <recommendedName>
        <fullName evidence="1">Queuine tRNA-ribosyltransferase</fullName>
        <ecNumber evidence="1">2.4.2.29</ecNumber>
    </recommendedName>
    <alternativeName>
        <fullName evidence="1">Guanine insertion enzyme</fullName>
    </alternativeName>
    <alternativeName>
        <fullName evidence="1">tRNA-guanine transglycosylase</fullName>
    </alternativeName>
</protein>
<name>TGT_THIDA</name>